<keyword id="KW-0963">Cytoplasm</keyword>
<keyword id="KW-1185">Reference proteome</keyword>
<keyword id="KW-0694">RNA-binding</keyword>
<dbReference type="EMBL" id="Z98271">
    <property type="protein sequence ID" value="CAB11000.1"/>
    <property type="molecule type" value="Genomic_DNA"/>
</dbReference>
<dbReference type="EMBL" id="AL583919">
    <property type="protein sequence ID" value="CAC30180.1"/>
    <property type="molecule type" value="Genomic_DNA"/>
</dbReference>
<dbReference type="PIR" id="T45309">
    <property type="entry name" value="T45309"/>
</dbReference>
<dbReference type="RefSeq" id="NP_301544.1">
    <property type="nucleotide sequence ID" value="NC_002677.1"/>
</dbReference>
<dbReference type="RefSeq" id="WP_010907868.1">
    <property type="nucleotide sequence ID" value="NC_002677.1"/>
</dbReference>
<dbReference type="SMR" id="O32881"/>
<dbReference type="STRING" id="272631.gene:17574494"/>
<dbReference type="KEGG" id="mle:ML0671"/>
<dbReference type="PATRIC" id="fig|272631.5.peg.1195"/>
<dbReference type="Leproma" id="ML0671"/>
<dbReference type="eggNOG" id="COG0691">
    <property type="taxonomic scope" value="Bacteria"/>
</dbReference>
<dbReference type="HOGENOM" id="CLU_108953_0_0_11"/>
<dbReference type="OrthoDB" id="9805462at2"/>
<dbReference type="Proteomes" id="UP000000806">
    <property type="component" value="Chromosome"/>
</dbReference>
<dbReference type="GO" id="GO:0005829">
    <property type="term" value="C:cytosol"/>
    <property type="evidence" value="ECO:0007669"/>
    <property type="project" value="TreeGrafter"/>
</dbReference>
<dbReference type="GO" id="GO:0003723">
    <property type="term" value="F:RNA binding"/>
    <property type="evidence" value="ECO:0007669"/>
    <property type="project" value="UniProtKB-UniRule"/>
</dbReference>
<dbReference type="GO" id="GO:0070929">
    <property type="term" value="P:trans-translation"/>
    <property type="evidence" value="ECO:0007669"/>
    <property type="project" value="UniProtKB-UniRule"/>
</dbReference>
<dbReference type="CDD" id="cd09294">
    <property type="entry name" value="SmpB"/>
    <property type="match status" value="1"/>
</dbReference>
<dbReference type="Gene3D" id="2.40.280.10">
    <property type="match status" value="1"/>
</dbReference>
<dbReference type="HAMAP" id="MF_00023">
    <property type="entry name" value="SmpB"/>
    <property type="match status" value="1"/>
</dbReference>
<dbReference type="InterPro" id="IPR023620">
    <property type="entry name" value="SmpB"/>
</dbReference>
<dbReference type="InterPro" id="IPR000037">
    <property type="entry name" value="SsrA-bd_prot"/>
</dbReference>
<dbReference type="InterPro" id="IPR020081">
    <property type="entry name" value="SsrA-bd_prot_CS"/>
</dbReference>
<dbReference type="NCBIfam" id="NF003843">
    <property type="entry name" value="PRK05422.1"/>
    <property type="match status" value="1"/>
</dbReference>
<dbReference type="NCBIfam" id="TIGR00086">
    <property type="entry name" value="smpB"/>
    <property type="match status" value="1"/>
</dbReference>
<dbReference type="PANTHER" id="PTHR30308:SF2">
    <property type="entry name" value="SSRA-BINDING PROTEIN"/>
    <property type="match status" value="1"/>
</dbReference>
<dbReference type="PANTHER" id="PTHR30308">
    <property type="entry name" value="TMRNA-BINDING COMPONENT OF TRANS-TRANSLATION TAGGING COMPLEX"/>
    <property type="match status" value="1"/>
</dbReference>
<dbReference type="Pfam" id="PF01668">
    <property type="entry name" value="SmpB"/>
    <property type="match status" value="1"/>
</dbReference>
<dbReference type="SUPFAM" id="SSF74982">
    <property type="entry name" value="Small protein B (SmpB)"/>
    <property type="match status" value="1"/>
</dbReference>
<dbReference type="PROSITE" id="PS01317">
    <property type="entry name" value="SSRP"/>
    <property type="match status" value="1"/>
</dbReference>
<gene>
    <name evidence="1" type="primary">smpB</name>
    <name type="ordered locus">ML0671</name>
    <name type="ORF">MLCB1779.19c</name>
</gene>
<sequence length="160" mass="18205">MARNPRGGKQIVATNRKARHDYAIIELFEAGVALLGTEVKSLREGHASLADAFATVDSGEVWLRNMHIPEYQHGSWTNHDPRRNRKLLLHRRQIDTLVGKIRDGNLALVPLSLYFAEGKVKVELALARGKKLHDKRQDMARRDAQREVIRELGRRAKGML</sequence>
<evidence type="ECO:0000255" key="1">
    <source>
        <dbReference type="HAMAP-Rule" id="MF_00023"/>
    </source>
</evidence>
<feature type="chain" id="PRO_0000102984" description="SsrA-binding protein">
    <location>
        <begin position="1"/>
        <end position="160"/>
    </location>
</feature>
<reference key="1">
    <citation type="journal article" date="2001" name="Nature">
        <title>Massive gene decay in the leprosy bacillus.</title>
        <authorList>
            <person name="Cole S.T."/>
            <person name="Eiglmeier K."/>
            <person name="Parkhill J."/>
            <person name="James K.D."/>
            <person name="Thomson N.R."/>
            <person name="Wheeler P.R."/>
            <person name="Honore N."/>
            <person name="Garnier T."/>
            <person name="Churcher C.M."/>
            <person name="Harris D.E."/>
            <person name="Mungall K.L."/>
            <person name="Basham D."/>
            <person name="Brown D."/>
            <person name="Chillingworth T."/>
            <person name="Connor R."/>
            <person name="Davies R.M."/>
            <person name="Devlin K."/>
            <person name="Duthoy S."/>
            <person name="Feltwell T."/>
            <person name="Fraser A."/>
            <person name="Hamlin N."/>
            <person name="Holroyd S."/>
            <person name="Hornsby T."/>
            <person name="Jagels K."/>
            <person name="Lacroix C."/>
            <person name="Maclean J."/>
            <person name="Moule S."/>
            <person name="Murphy L.D."/>
            <person name="Oliver K."/>
            <person name="Quail M.A."/>
            <person name="Rajandream M.A."/>
            <person name="Rutherford K.M."/>
            <person name="Rutter S."/>
            <person name="Seeger K."/>
            <person name="Simon S."/>
            <person name="Simmonds M."/>
            <person name="Skelton J."/>
            <person name="Squares R."/>
            <person name="Squares S."/>
            <person name="Stevens K."/>
            <person name="Taylor K."/>
            <person name="Whitehead S."/>
            <person name="Woodward J.R."/>
            <person name="Barrell B.G."/>
        </authorList>
    </citation>
    <scope>NUCLEOTIDE SEQUENCE [LARGE SCALE GENOMIC DNA]</scope>
    <source>
        <strain>TN</strain>
    </source>
</reference>
<comment type="function">
    <text evidence="1">Required for rescue of stalled ribosomes mediated by trans-translation. Binds to transfer-messenger RNA (tmRNA), required for stable association of tmRNA with ribosomes. tmRNA and SmpB together mimic tRNA shape, replacing the anticodon stem-loop with SmpB. tmRNA is encoded by the ssrA gene; the 2 termini fold to resemble tRNA(Ala) and it encodes a 'tag peptide', a short internal open reading frame. During trans-translation Ala-aminoacylated tmRNA acts like a tRNA, entering the A-site of stalled ribosomes, displacing the stalled mRNA. The ribosome then switches to translate the ORF on the tmRNA; the nascent peptide is terminated with the 'tag peptide' encoded by the tmRNA and targeted for degradation. The ribosome is freed to recommence translation, which seems to be the essential function of trans-translation.</text>
</comment>
<comment type="subcellular location">
    <subcellularLocation>
        <location evidence="1">Cytoplasm</location>
    </subcellularLocation>
    <text evidence="1">The tmRNA-SmpB complex associates with stalled 70S ribosomes.</text>
</comment>
<comment type="similarity">
    <text evidence="1">Belongs to the SmpB family.</text>
</comment>
<accession>O32881</accession>
<proteinExistence type="inferred from homology"/>
<name>SSRP_MYCLE</name>
<organism>
    <name type="scientific">Mycobacterium leprae (strain TN)</name>
    <dbReference type="NCBI Taxonomy" id="272631"/>
    <lineage>
        <taxon>Bacteria</taxon>
        <taxon>Bacillati</taxon>
        <taxon>Actinomycetota</taxon>
        <taxon>Actinomycetes</taxon>
        <taxon>Mycobacteriales</taxon>
        <taxon>Mycobacteriaceae</taxon>
        <taxon>Mycobacterium</taxon>
    </lineage>
</organism>
<protein>
    <recommendedName>
        <fullName evidence="1">SsrA-binding protein</fullName>
    </recommendedName>
    <alternativeName>
        <fullName evidence="1">Small protein B</fullName>
    </alternativeName>
</protein>